<gene>
    <name type="ORF">AGAP002499</name>
</gene>
<evidence type="ECO:0000250" key="1">
    <source>
        <dbReference type="UniProtKB" id="P42412"/>
    </source>
</evidence>
<evidence type="ECO:0000250" key="2">
    <source>
        <dbReference type="UniProtKB" id="Q02252"/>
    </source>
</evidence>
<evidence type="ECO:0000250" key="3">
    <source>
        <dbReference type="UniProtKB" id="Q02253"/>
    </source>
</evidence>
<evidence type="ECO:0000255" key="4"/>
<evidence type="ECO:0000255" key="5">
    <source>
        <dbReference type="PROSITE-ProRule" id="PRU10008"/>
    </source>
</evidence>
<evidence type="ECO:0000305" key="6"/>
<comment type="function">
    <text evidence="3">Probable malonate and methylmalonate semialdehyde dehydrogenase involved in the catabolism of valine, thymine, and compounds catabolized by way of beta-alanine, including uracil and cytidine.</text>
</comment>
<comment type="catalytic activity">
    <reaction evidence="3">
        <text>2-methyl-3-oxopropanoate + NAD(+) + CoA + H2O = propanoyl-CoA + hydrogencarbonate + NADH + H(+)</text>
        <dbReference type="Rhea" id="RHEA:20804"/>
        <dbReference type="ChEBI" id="CHEBI:15377"/>
        <dbReference type="ChEBI" id="CHEBI:15378"/>
        <dbReference type="ChEBI" id="CHEBI:17544"/>
        <dbReference type="ChEBI" id="CHEBI:57287"/>
        <dbReference type="ChEBI" id="CHEBI:57392"/>
        <dbReference type="ChEBI" id="CHEBI:57540"/>
        <dbReference type="ChEBI" id="CHEBI:57700"/>
        <dbReference type="ChEBI" id="CHEBI:57945"/>
        <dbReference type="EC" id="1.2.1.27"/>
    </reaction>
    <physiologicalReaction direction="left-to-right" evidence="3">
        <dbReference type="Rhea" id="RHEA:20805"/>
    </physiologicalReaction>
</comment>
<comment type="catalytic activity">
    <reaction evidence="3">
        <text>3-oxopropanoate + NAD(+) + CoA + H2O = hydrogencarbonate + acetyl-CoA + NADH + H(+)</text>
        <dbReference type="Rhea" id="RHEA:76615"/>
        <dbReference type="ChEBI" id="CHEBI:15377"/>
        <dbReference type="ChEBI" id="CHEBI:15378"/>
        <dbReference type="ChEBI" id="CHEBI:17544"/>
        <dbReference type="ChEBI" id="CHEBI:33190"/>
        <dbReference type="ChEBI" id="CHEBI:57287"/>
        <dbReference type="ChEBI" id="CHEBI:57288"/>
        <dbReference type="ChEBI" id="CHEBI:57540"/>
        <dbReference type="ChEBI" id="CHEBI:57945"/>
        <dbReference type="EC" id="1.2.1.27"/>
    </reaction>
    <physiologicalReaction direction="left-to-right" evidence="3">
        <dbReference type="Rhea" id="RHEA:76616"/>
    </physiologicalReaction>
</comment>
<comment type="subunit">
    <text evidence="3">Homotetramer.</text>
</comment>
<comment type="subcellular location">
    <subcellularLocation>
        <location evidence="3">Mitochondrion</location>
    </subcellularLocation>
</comment>
<comment type="similarity">
    <text evidence="4">Belongs to the aldehyde dehydrogenase family.</text>
</comment>
<accession>Q7QC84</accession>
<name>MMSA_ANOGA</name>
<sequence>MALLRLVATECRNVLQRGYSTASVPTTKMFIDGKFVESKTNDWIDLHDPATNEVVTRVPKCTQDEMQTAVESSKKAYKTWRQSSILSRQQVMLKLQHIIRNNMSELAKNITKEQGKTLIDAEGDVLRGLQVVEHCCSITSLQMGETVPNIAKDMDTYSYHLPLGVTAGIAPFNFPAMIPLWMFPVAITCGNTSIIKPSERVPGATMLLMEMLNEAGCPPGVVNVIHGAHDAVNFVCDNPDIRAVSFVGSDQAGKYIYERAGRNGKRVQCNMGAKNHGVIMADANKENTLNQLAGAAFGAAGQRCMALSTAVFVGEARNWIPDLVERARKLKVNAGHLPGTDLGPVISPQSKQRINELVESGAKEGAKIVLDGRNIKVEGFEKGNFVGPTIISDVTPNMKCYTEEIFGPVLVCLSVDTIDEAIELINNNPYGNGTAIFTTNGATARKFVNDIDVGQVGVNVPIPVPLPMFSFTGSRGSFLGDCHFYGKQGIKFYTQTKTVTQLWREGDVSHTKAAVAMPTMK</sequence>
<organism>
    <name type="scientific">Anopheles gambiae</name>
    <name type="common">African malaria mosquito</name>
    <dbReference type="NCBI Taxonomy" id="7165"/>
    <lineage>
        <taxon>Eukaryota</taxon>
        <taxon>Metazoa</taxon>
        <taxon>Ecdysozoa</taxon>
        <taxon>Arthropoda</taxon>
        <taxon>Hexapoda</taxon>
        <taxon>Insecta</taxon>
        <taxon>Pterygota</taxon>
        <taxon>Neoptera</taxon>
        <taxon>Endopterygota</taxon>
        <taxon>Diptera</taxon>
        <taxon>Nematocera</taxon>
        <taxon>Culicoidea</taxon>
        <taxon>Culicidae</taxon>
        <taxon>Anophelinae</taxon>
        <taxon>Anopheles</taxon>
    </lineage>
</organism>
<proteinExistence type="inferred from homology"/>
<dbReference type="EC" id="1.2.1.27" evidence="3"/>
<dbReference type="EMBL" id="AAAB01008859">
    <property type="protein sequence ID" value="EAA07972.4"/>
    <property type="molecule type" value="Genomic_DNA"/>
</dbReference>
<dbReference type="SMR" id="Q7QC84"/>
<dbReference type="FunCoup" id="Q7QC84">
    <property type="interactions" value="1303"/>
</dbReference>
<dbReference type="STRING" id="7165.Q7QC84"/>
<dbReference type="PaxDb" id="7165-AGAP002499-PA"/>
<dbReference type="EnsemblMetazoa" id="AGAP002499-RA">
    <property type="protein sequence ID" value="AGAP002499-PA"/>
    <property type="gene ID" value="AGAP002499"/>
</dbReference>
<dbReference type="GeneID" id="1273463"/>
<dbReference type="KEGG" id="aga:1273463"/>
<dbReference type="VEuPathDB" id="VectorBase:AGAMI1_012091"/>
<dbReference type="VEuPathDB" id="VectorBase:AGAP002499"/>
<dbReference type="eggNOG" id="KOG2449">
    <property type="taxonomic scope" value="Eukaryota"/>
</dbReference>
<dbReference type="HOGENOM" id="CLU_005391_1_10_1"/>
<dbReference type="InParanoid" id="Q7QC84"/>
<dbReference type="OMA" id="GGAKNHI"/>
<dbReference type="PhylomeDB" id="Q7QC84"/>
<dbReference type="Proteomes" id="UP000007062">
    <property type="component" value="Chromosome 2R"/>
</dbReference>
<dbReference type="GO" id="GO:0005739">
    <property type="term" value="C:mitochondrion"/>
    <property type="evidence" value="ECO:0000318"/>
    <property type="project" value="GO_Central"/>
</dbReference>
<dbReference type="GO" id="GO:0018478">
    <property type="term" value="F:malonate-semialdehyde dehydrogenase (acetylating) activity"/>
    <property type="evidence" value="ECO:0007669"/>
    <property type="project" value="UniProtKB-EC"/>
</dbReference>
<dbReference type="GO" id="GO:0004491">
    <property type="term" value="F:methylmalonate-semialdehyde dehydrogenase (acylating, NAD) activity"/>
    <property type="evidence" value="ECO:0000318"/>
    <property type="project" value="GO_Central"/>
</dbReference>
<dbReference type="GO" id="GO:0006210">
    <property type="term" value="P:thymine catabolic process"/>
    <property type="evidence" value="ECO:0000318"/>
    <property type="project" value="GO_Central"/>
</dbReference>
<dbReference type="GO" id="GO:0006574">
    <property type="term" value="P:valine catabolic process"/>
    <property type="evidence" value="ECO:0000318"/>
    <property type="project" value="GO_Central"/>
</dbReference>
<dbReference type="CDD" id="cd07085">
    <property type="entry name" value="ALDH_F6_MMSDH"/>
    <property type="match status" value="1"/>
</dbReference>
<dbReference type="FunFam" id="3.40.309.10:FF:000002">
    <property type="entry name" value="Methylmalonate-semialdehyde dehydrogenase (Acylating)"/>
    <property type="match status" value="1"/>
</dbReference>
<dbReference type="FunFam" id="3.40.605.10:FF:000003">
    <property type="entry name" value="Methylmalonate-semialdehyde dehydrogenase [acylating]"/>
    <property type="match status" value="1"/>
</dbReference>
<dbReference type="Gene3D" id="3.40.605.10">
    <property type="entry name" value="Aldehyde Dehydrogenase, Chain A, domain 1"/>
    <property type="match status" value="1"/>
</dbReference>
<dbReference type="Gene3D" id="3.40.309.10">
    <property type="entry name" value="Aldehyde Dehydrogenase, Chain A, domain 2"/>
    <property type="match status" value="1"/>
</dbReference>
<dbReference type="InterPro" id="IPR016161">
    <property type="entry name" value="Ald_DH/histidinol_DH"/>
</dbReference>
<dbReference type="InterPro" id="IPR016163">
    <property type="entry name" value="Ald_DH_C"/>
</dbReference>
<dbReference type="InterPro" id="IPR016160">
    <property type="entry name" value="Ald_DH_CS_CYS"/>
</dbReference>
<dbReference type="InterPro" id="IPR016162">
    <property type="entry name" value="Ald_DH_N"/>
</dbReference>
<dbReference type="InterPro" id="IPR015590">
    <property type="entry name" value="Aldehyde_DH_dom"/>
</dbReference>
<dbReference type="InterPro" id="IPR010061">
    <property type="entry name" value="MeMal-semiAld_DH"/>
</dbReference>
<dbReference type="NCBIfam" id="TIGR01722">
    <property type="entry name" value="MMSDH"/>
    <property type="match status" value="1"/>
</dbReference>
<dbReference type="PANTHER" id="PTHR43866">
    <property type="entry name" value="MALONATE-SEMIALDEHYDE DEHYDROGENASE"/>
    <property type="match status" value="1"/>
</dbReference>
<dbReference type="PANTHER" id="PTHR43866:SF3">
    <property type="entry name" value="METHYLMALONATE-SEMIALDEHYDE DEHYDROGENASE [ACYLATING], MITOCHONDRIAL"/>
    <property type="match status" value="1"/>
</dbReference>
<dbReference type="Pfam" id="PF00171">
    <property type="entry name" value="Aldedh"/>
    <property type="match status" value="1"/>
</dbReference>
<dbReference type="SUPFAM" id="SSF53720">
    <property type="entry name" value="ALDH-like"/>
    <property type="match status" value="1"/>
</dbReference>
<dbReference type="PROSITE" id="PS00070">
    <property type="entry name" value="ALDEHYDE_DEHYDR_CYS"/>
    <property type="match status" value="1"/>
</dbReference>
<feature type="transit peptide" description="Mitochondrion" evidence="4">
    <location>
        <begin position="1"/>
        <end status="unknown"/>
    </location>
</feature>
<feature type="chain" id="PRO_0000043372" description="Probable methylmalonate-semialdehyde/malonate-semialdehyde dehydrogenase [acylating], mitochondrial">
    <location>
        <begin status="unknown"/>
        <end position="521"/>
    </location>
</feature>
<feature type="active site" description="Nucleophile" evidence="2 5">
    <location>
        <position position="304"/>
    </location>
</feature>
<feature type="binding site" evidence="1">
    <location>
        <position position="170"/>
    </location>
    <ligand>
        <name>NAD(+)</name>
        <dbReference type="ChEBI" id="CHEBI:57540"/>
    </ligand>
</feature>
<feature type="binding site" evidence="1">
    <location>
        <position position="172"/>
    </location>
    <ligand>
        <name>NAD(+)</name>
        <dbReference type="ChEBI" id="CHEBI:57540"/>
    </ligand>
</feature>
<feature type="binding site" evidence="1">
    <location>
        <position position="196"/>
    </location>
    <ligand>
        <name>NAD(+)</name>
        <dbReference type="ChEBI" id="CHEBI:57540"/>
    </ligand>
</feature>
<feature type="binding site" evidence="1">
    <location>
        <position position="199"/>
    </location>
    <ligand>
        <name>NAD(+)</name>
        <dbReference type="ChEBI" id="CHEBI:57540"/>
    </ligand>
</feature>
<feature type="binding site" evidence="1">
    <location>
        <position position="200"/>
    </location>
    <ligand>
        <name>NAD(+)</name>
        <dbReference type="ChEBI" id="CHEBI:57540"/>
    </ligand>
</feature>
<feature type="binding site" evidence="1">
    <location>
        <position position="249"/>
    </location>
    <ligand>
        <name>NAD(+)</name>
        <dbReference type="ChEBI" id="CHEBI:57540"/>
    </ligand>
</feature>
<feature type="binding site" evidence="1">
    <location>
        <position position="404"/>
    </location>
    <ligand>
        <name>NAD(+)</name>
        <dbReference type="ChEBI" id="CHEBI:57540"/>
    </ligand>
</feature>
<reference evidence="6" key="1">
    <citation type="journal article" date="2002" name="Science">
        <title>The genome sequence of the malaria mosquito Anopheles gambiae.</title>
        <authorList>
            <person name="Holt R.A."/>
            <person name="Subramanian G.M."/>
            <person name="Halpern A."/>
            <person name="Sutton G.G."/>
            <person name="Charlab R."/>
            <person name="Nusskern D.R."/>
            <person name="Wincker P."/>
            <person name="Clark A.G."/>
            <person name="Ribeiro J.M.C."/>
            <person name="Wides R."/>
            <person name="Salzberg S.L."/>
            <person name="Loftus B.J."/>
            <person name="Yandell M.D."/>
            <person name="Majoros W.H."/>
            <person name="Rusch D.B."/>
            <person name="Lai Z."/>
            <person name="Kraft C.L."/>
            <person name="Abril J.F."/>
            <person name="Anthouard V."/>
            <person name="Arensburger P."/>
            <person name="Atkinson P.W."/>
            <person name="Baden H."/>
            <person name="de Berardinis V."/>
            <person name="Baldwin D."/>
            <person name="Benes V."/>
            <person name="Biedler J."/>
            <person name="Blass C."/>
            <person name="Bolanos R."/>
            <person name="Boscus D."/>
            <person name="Barnstead M."/>
            <person name="Cai S."/>
            <person name="Center A."/>
            <person name="Chaturverdi K."/>
            <person name="Christophides G.K."/>
            <person name="Chrystal M.A.M."/>
            <person name="Clamp M."/>
            <person name="Cravchik A."/>
            <person name="Curwen V."/>
            <person name="Dana A."/>
            <person name="Delcher A."/>
            <person name="Dew I."/>
            <person name="Evans C.A."/>
            <person name="Flanigan M."/>
            <person name="Grundschober-Freimoser A."/>
            <person name="Friedli L."/>
            <person name="Gu Z."/>
            <person name="Guan P."/>
            <person name="Guigo R."/>
            <person name="Hillenmeyer M.E."/>
            <person name="Hladun S.L."/>
            <person name="Hogan J.R."/>
            <person name="Hong Y.S."/>
            <person name="Hoover J."/>
            <person name="Jaillon O."/>
            <person name="Ke Z."/>
            <person name="Kodira C.D."/>
            <person name="Kokoza E."/>
            <person name="Koutsos A."/>
            <person name="Letunic I."/>
            <person name="Levitsky A.A."/>
            <person name="Liang Y."/>
            <person name="Lin J.-J."/>
            <person name="Lobo N.F."/>
            <person name="Lopez J.R."/>
            <person name="Malek J.A."/>
            <person name="McIntosh T.C."/>
            <person name="Meister S."/>
            <person name="Miller J.R."/>
            <person name="Mobarry C."/>
            <person name="Mongin E."/>
            <person name="Murphy S.D."/>
            <person name="O'Brochta D.A."/>
            <person name="Pfannkoch C."/>
            <person name="Qi R."/>
            <person name="Regier M.A."/>
            <person name="Remington K."/>
            <person name="Shao H."/>
            <person name="Sharakhova M.V."/>
            <person name="Sitter C.D."/>
            <person name="Shetty J."/>
            <person name="Smith T.J."/>
            <person name="Strong R."/>
            <person name="Sun J."/>
            <person name="Thomasova D."/>
            <person name="Ton L.Q."/>
            <person name="Topalis P."/>
            <person name="Tu Z.J."/>
            <person name="Unger M.F."/>
            <person name="Walenz B."/>
            <person name="Wang A.H."/>
            <person name="Wang J."/>
            <person name="Wang M."/>
            <person name="Wang X."/>
            <person name="Woodford K.J."/>
            <person name="Wortman J.R."/>
            <person name="Wu M."/>
            <person name="Yao A."/>
            <person name="Zdobnov E.M."/>
            <person name="Zhang H."/>
            <person name="Zhao Q."/>
            <person name="Zhao S."/>
            <person name="Zhu S.C."/>
            <person name="Zhimulev I."/>
            <person name="Coluzzi M."/>
            <person name="della Torre A."/>
            <person name="Roth C.W."/>
            <person name="Louis C."/>
            <person name="Kalush F."/>
            <person name="Mural R.J."/>
            <person name="Myers E.W."/>
            <person name="Adams M.D."/>
            <person name="Smith H.O."/>
            <person name="Broder S."/>
            <person name="Gardner M.J."/>
            <person name="Fraser C.M."/>
            <person name="Birney E."/>
            <person name="Bork P."/>
            <person name="Brey P.T."/>
            <person name="Venter J.C."/>
            <person name="Weissenbach J."/>
            <person name="Kafatos F.C."/>
            <person name="Collins F.H."/>
            <person name="Hoffman S.L."/>
        </authorList>
    </citation>
    <scope>NUCLEOTIDE SEQUENCE [LARGE SCALE GENOMIC DNA]</scope>
    <source>
        <strain>PEST</strain>
    </source>
</reference>
<keyword id="KW-0496">Mitochondrion</keyword>
<keyword id="KW-0520">NAD</keyword>
<keyword id="KW-0560">Oxidoreductase</keyword>
<keyword id="KW-1185">Reference proteome</keyword>
<keyword id="KW-0809">Transit peptide</keyword>
<protein>
    <recommendedName>
        <fullName evidence="3">Probable methylmalonate-semialdehyde/malonate-semialdehyde dehydrogenase [acylating], mitochondrial</fullName>
        <shortName evidence="3">MMSDH</shortName>
        <ecNumber evidence="3">1.2.1.27</ecNumber>
    </recommendedName>
    <alternativeName>
        <fullName evidence="3">Malonate-semialdehyde dehydrogenase [acylating]</fullName>
    </alternativeName>
</protein>